<gene>
    <name type="ordered locus">MS0316</name>
</gene>
<proteinExistence type="inferred from homology"/>
<dbReference type="EMBL" id="AE016827">
    <property type="protein sequence ID" value="AAU36923.1"/>
    <property type="molecule type" value="Genomic_DNA"/>
</dbReference>
<dbReference type="RefSeq" id="WP_011199498.1">
    <property type="nucleotide sequence ID" value="NC_006300.1"/>
</dbReference>
<dbReference type="SMR" id="Q65VT7"/>
<dbReference type="STRING" id="221988.MS0316"/>
<dbReference type="KEGG" id="msu:MS0316"/>
<dbReference type="eggNOG" id="COG2924">
    <property type="taxonomic scope" value="Bacteria"/>
</dbReference>
<dbReference type="HOGENOM" id="CLU_170994_0_0_6"/>
<dbReference type="OrthoDB" id="9804318at2"/>
<dbReference type="Proteomes" id="UP000000607">
    <property type="component" value="Chromosome"/>
</dbReference>
<dbReference type="GO" id="GO:0005829">
    <property type="term" value="C:cytosol"/>
    <property type="evidence" value="ECO:0007669"/>
    <property type="project" value="TreeGrafter"/>
</dbReference>
<dbReference type="GO" id="GO:0005506">
    <property type="term" value="F:iron ion binding"/>
    <property type="evidence" value="ECO:0007669"/>
    <property type="project" value="UniProtKB-UniRule"/>
</dbReference>
<dbReference type="GO" id="GO:0034599">
    <property type="term" value="P:cellular response to oxidative stress"/>
    <property type="evidence" value="ECO:0007669"/>
    <property type="project" value="TreeGrafter"/>
</dbReference>
<dbReference type="FunFam" id="1.10.3880.10:FF:000001">
    <property type="entry name" value="Probable Fe(2+)-trafficking protein"/>
    <property type="match status" value="1"/>
</dbReference>
<dbReference type="Gene3D" id="1.10.3880.10">
    <property type="entry name" value="Fe(II) trafficking protein YggX"/>
    <property type="match status" value="1"/>
</dbReference>
<dbReference type="HAMAP" id="MF_00686">
    <property type="entry name" value="Fe_traffic_YggX"/>
    <property type="match status" value="1"/>
</dbReference>
<dbReference type="InterPro" id="IPR007457">
    <property type="entry name" value="Fe_traffick_prot_YggX"/>
</dbReference>
<dbReference type="InterPro" id="IPR036766">
    <property type="entry name" value="Fe_traffick_prot_YggX_sf"/>
</dbReference>
<dbReference type="NCBIfam" id="NF003817">
    <property type="entry name" value="PRK05408.1"/>
    <property type="match status" value="1"/>
</dbReference>
<dbReference type="PANTHER" id="PTHR36965">
    <property type="entry name" value="FE(2+)-TRAFFICKING PROTEIN-RELATED"/>
    <property type="match status" value="1"/>
</dbReference>
<dbReference type="PANTHER" id="PTHR36965:SF1">
    <property type="entry name" value="FE(2+)-TRAFFICKING PROTEIN-RELATED"/>
    <property type="match status" value="1"/>
</dbReference>
<dbReference type="Pfam" id="PF04362">
    <property type="entry name" value="Iron_traffic"/>
    <property type="match status" value="1"/>
</dbReference>
<dbReference type="PIRSF" id="PIRSF029827">
    <property type="entry name" value="Fe_traffic_YggX"/>
    <property type="match status" value="1"/>
</dbReference>
<dbReference type="SUPFAM" id="SSF111148">
    <property type="entry name" value="YggX-like"/>
    <property type="match status" value="1"/>
</dbReference>
<feature type="chain" id="PRO_0000214489" description="Probable Fe(2+)-trafficking protein">
    <location>
        <begin position="1"/>
        <end position="91"/>
    </location>
</feature>
<organism>
    <name type="scientific">Mannheimia succiniciproducens (strain KCTC 0769BP / MBEL55E)</name>
    <dbReference type="NCBI Taxonomy" id="221988"/>
    <lineage>
        <taxon>Bacteria</taxon>
        <taxon>Pseudomonadati</taxon>
        <taxon>Pseudomonadota</taxon>
        <taxon>Gammaproteobacteria</taxon>
        <taxon>Pasteurellales</taxon>
        <taxon>Pasteurellaceae</taxon>
        <taxon>Basfia</taxon>
    </lineage>
</organism>
<keyword id="KW-0408">Iron</keyword>
<reference key="1">
    <citation type="journal article" date="2004" name="Nat. Biotechnol.">
        <title>The genome sequence of the capnophilic rumen bacterium Mannheimia succiniciproducens.</title>
        <authorList>
            <person name="Hong S.H."/>
            <person name="Kim J.S."/>
            <person name="Lee S.Y."/>
            <person name="In Y.H."/>
            <person name="Choi S.S."/>
            <person name="Rih J.-K."/>
            <person name="Kim C.H."/>
            <person name="Jeong H."/>
            <person name="Hur C.G."/>
            <person name="Kim J.J."/>
        </authorList>
    </citation>
    <scope>NUCLEOTIDE SEQUENCE [LARGE SCALE GENOMIC DNA]</scope>
    <source>
        <strain>KCTC 0769BP / MBEL55E</strain>
    </source>
</reference>
<accession>Q65VT7</accession>
<sequence>MSRTVFCEYLKQEAEGLDFQLYPGELGKRIFDNISKRAWGEWMKKQTMLVNEKKLNMMNADHRKLLEQEMVNFLFEGKDVHIEGYIPQATN</sequence>
<evidence type="ECO:0000255" key="1">
    <source>
        <dbReference type="HAMAP-Rule" id="MF_00686"/>
    </source>
</evidence>
<name>FETP_MANSM</name>
<comment type="function">
    <text evidence="1">Could be a mediator in iron transactions between iron acquisition and iron-requiring processes, such as synthesis and/or repair of Fe-S clusters in biosynthetic enzymes.</text>
</comment>
<comment type="similarity">
    <text evidence="1">Belongs to the Fe(2+)-trafficking protein family.</text>
</comment>
<protein>
    <recommendedName>
        <fullName evidence="1">Probable Fe(2+)-trafficking protein</fullName>
    </recommendedName>
</protein>